<organism>
    <name type="scientific">Mus musculus</name>
    <name type="common">Mouse</name>
    <dbReference type="NCBI Taxonomy" id="10090"/>
    <lineage>
        <taxon>Eukaryota</taxon>
        <taxon>Metazoa</taxon>
        <taxon>Chordata</taxon>
        <taxon>Craniata</taxon>
        <taxon>Vertebrata</taxon>
        <taxon>Euteleostomi</taxon>
        <taxon>Mammalia</taxon>
        <taxon>Eutheria</taxon>
        <taxon>Euarchontoglires</taxon>
        <taxon>Glires</taxon>
        <taxon>Rodentia</taxon>
        <taxon>Myomorpha</taxon>
        <taxon>Muroidea</taxon>
        <taxon>Muridae</taxon>
        <taxon>Murinae</taxon>
        <taxon>Mus</taxon>
        <taxon>Mus</taxon>
    </lineage>
</organism>
<name>LYRM4_MOUSE</name>
<keyword id="KW-0496">Mitochondrion</keyword>
<keyword id="KW-0539">Nucleus</keyword>
<keyword id="KW-1185">Reference proteome</keyword>
<evidence type="ECO:0000250" key="1">
    <source>
        <dbReference type="UniProtKB" id="Q9H1K1"/>
    </source>
</evidence>
<evidence type="ECO:0000250" key="2">
    <source>
        <dbReference type="UniProtKB" id="Q9HD34"/>
    </source>
</evidence>
<evidence type="ECO:0000269" key="3">
    <source>
    </source>
</evidence>
<evidence type="ECO:0000269" key="4">
    <source>
    </source>
</evidence>
<evidence type="ECO:0000305" key="5"/>
<evidence type="ECO:0000312" key="6">
    <source>
        <dbReference type="MGI" id="MGI:2683538"/>
    </source>
</evidence>
<evidence type="ECO:0007744" key="7">
    <source>
    </source>
</evidence>
<reference key="1">
    <citation type="journal article" date="2005" name="Science">
        <title>The transcriptional landscape of the mammalian genome.</title>
        <authorList>
            <person name="Carninci P."/>
            <person name="Kasukawa T."/>
            <person name="Katayama S."/>
            <person name="Gough J."/>
            <person name="Frith M.C."/>
            <person name="Maeda N."/>
            <person name="Oyama R."/>
            <person name="Ravasi T."/>
            <person name="Lenhard B."/>
            <person name="Wells C."/>
            <person name="Kodzius R."/>
            <person name="Shimokawa K."/>
            <person name="Bajic V.B."/>
            <person name="Brenner S.E."/>
            <person name="Batalov S."/>
            <person name="Forrest A.R."/>
            <person name="Zavolan M."/>
            <person name="Davis M.J."/>
            <person name="Wilming L.G."/>
            <person name="Aidinis V."/>
            <person name="Allen J.E."/>
            <person name="Ambesi-Impiombato A."/>
            <person name="Apweiler R."/>
            <person name="Aturaliya R.N."/>
            <person name="Bailey T.L."/>
            <person name="Bansal M."/>
            <person name="Baxter L."/>
            <person name="Beisel K.W."/>
            <person name="Bersano T."/>
            <person name="Bono H."/>
            <person name="Chalk A.M."/>
            <person name="Chiu K.P."/>
            <person name="Choudhary V."/>
            <person name="Christoffels A."/>
            <person name="Clutterbuck D.R."/>
            <person name="Crowe M.L."/>
            <person name="Dalla E."/>
            <person name="Dalrymple B.P."/>
            <person name="de Bono B."/>
            <person name="Della Gatta G."/>
            <person name="di Bernardo D."/>
            <person name="Down T."/>
            <person name="Engstrom P."/>
            <person name="Fagiolini M."/>
            <person name="Faulkner G."/>
            <person name="Fletcher C.F."/>
            <person name="Fukushima T."/>
            <person name="Furuno M."/>
            <person name="Futaki S."/>
            <person name="Gariboldi M."/>
            <person name="Georgii-Hemming P."/>
            <person name="Gingeras T.R."/>
            <person name="Gojobori T."/>
            <person name="Green R.E."/>
            <person name="Gustincich S."/>
            <person name="Harbers M."/>
            <person name="Hayashi Y."/>
            <person name="Hensch T.K."/>
            <person name="Hirokawa N."/>
            <person name="Hill D."/>
            <person name="Huminiecki L."/>
            <person name="Iacono M."/>
            <person name="Ikeo K."/>
            <person name="Iwama A."/>
            <person name="Ishikawa T."/>
            <person name="Jakt M."/>
            <person name="Kanapin A."/>
            <person name="Katoh M."/>
            <person name="Kawasawa Y."/>
            <person name="Kelso J."/>
            <person name="Kitamura H."/>
            <person name="Kitano H."/>
            <person name="Kollias G."/>
            <person name="Krishnan S.P."/>
            <person name="Kruger A."/>
            <person name="Kummerfeld S.K."/>
            <person name="Kurochkin I.V."/>
            <person name="Lareau L.F."/>
            <person name="Lazarevic D."/>
            <person name="Lipovich L."/>
            <person name="Liu J."/>
            <person name="Liuni S."/>
            <person name="McWilliam S."/>
            <person name="Madan Babu M."/>
            <person name="Madera M."/>
            <person name="Marchionni L."/>
            <person name="Matsuda H."/>
            <person name="Matsuzawa S."/>
            <person name="Miki H."/>
            <person name="Mignone F."/>
            <person name="Miyake S."/>
            <person name="Morris K."/>
            <person name="Mottagui-Tabar S."/>
            <person name="Mulder N."/>
            <person name="Nakano N."/>
            <person name="Nakauchi H."/>
            <person name="Ng P."/>
            <person name="Nilsson R."/>
            <person name="Nishiguchi S."/>
            <person name="Nishikawa S."/>
            <person name="Nori F."/>
            <person name="Ohara O."/>
            <person name="Okazaki Y."/>
            <person name="Orlando V."/>
            <person name="Pang K.C."/>
            <person name="Pavan W.J."/>
            <person name="Pavesi G."/>
            <person name="Pesole G."/>
            <person name="Petrovsky N."/>
            <person name="Piazza S."/>
            <person name="Reed J."/>
            <person name="Reid J.F."/>
            <person name="Ring B.Z."/>
            <person name="Ringwald M."/>
            <person name="Rost B."/>
            <person name="Ruan Y."/>
            <person name="Salzberg S.L."/>
            <person name="Sandelin A."/>
            <person name="Schneider C."/>
            <person name="Schoenbach C."/>
            <person name="Sekiguchi K."/>
            <person name="Semple C.A."/>
            <person name="Seno S."/>
            <person name="Sessa L."/>
            <person name="Sheng Y."/>
            <person name="Shibata Y."/>
            <person name="Shimada H."/>
            <person name="Shimada K."/>
            <person name="Silva D."/>
            <person name="Sinclair B."/>
            <person name="Sperling S."/>
            <person name="Stupka E."/>
            <person name="Sugiura K."/>
            <person name="Sultana R."/>
            <person name="Takenaka Y."/>
            <person name="Taki K."/>
            <person name="Tammoja K."/>
            <person name="Tan S.L."/>
            <person name="Tang S."/>
            <person name="Taylor M.S."/>
            <person name="Tegner J."/>
            <person name="Teichmann S.A."/>
            <person name="Ueda H.R."/>
            <person name="van Nimwegen E."/>
            <person name="Verardo R."/>
            <person name="Wei C.L."/>
            <person name="Yagi K."/>
            <person name="Yamanishi H."/>
            <person name="Zabarovsky E."/>
            <person name="Zhu S."/>
            <person name="Zimmer A."/>
            <person name="Hide W."/>
            <person name="Bult C."/>
            <person name="Grimmond S.M."/>
            <person name="Teasdale R.D."/>
            <person name="Liu E.T."/>
            <person name="Brusic V."/>
            <person name="Quackenbush J."/>
            <person name="Wahlestedt C."/>
            <person name="Mattick J.S."/>
            <person name="Hume D.A."/>
            <person name="Kai C."/>
            <person name="Sasaki D."/>
            <person name="Tomaru Y."/>
            <person name="Fukuda S."/>
            <person name="Kanamori-Katayama M."/>
            <person name="Suzuki M."/>
            <person name="Aoki J."/>
            <person name="Arakawa T."/>
            <person name="Iida J."/>
            <person name="Imamura K."/>
            <person name="Itoh M."/>
            <person name="Kato T."/>
            <person name="Kawaji H."/>
            <person name="Kawagashira N."/>
            <person name="Kawashima T."/>
            <person name="Kojima M."/>
            <person name="Kondo S."/>
            <person name="Konno H."/>
            <person name="Nakano K."/>
            <person name="Ninomiya N."/>
            <person name="Nishio T."/>
            <person name="Okada M."/>
            <person name="Plessy C."/>
            <person name="Shibata K."/>
            <person name="Shiraki T."/>
            <person name="Suzuki S."/>
            <person name="Tagami M."/>
            <person name="Waki K."/>
            <person name="Watahiki A."/>
            <person name="Okamura-Oho Y."/>
            <person name="Suzuki H."/>
            <person name="Kawai J."/>
            <person name="Hayashizaki Y."/>
        </authorList>
    </citation>
    <scope>NUCLEOTIDE SEQUENCE [LARGE SCALE MRNA]</scope>
    <source>
        <strain>C57BL/6J</strain>
        <tissue>Pancreas</tissue>
    </source>
</reference>
<reference key="2">
    <citation type="journal article" date="2004" name="Genome Res.">
        <title>The status, quality, and expansion of the NIH full-length cDNA project: the Mammalian Gene Collection (MGC).</title>
        <authorList>
            <consortium name="The MGC Project Team"/>
        </authorList>
    </citation>
    <scope>NUCLEOTIDE SEQUENCE [LARGE SCALE MRNA]</scope>
</reference>
<reference key="3">
    <citation type="journal article" date="2010" name="Cell">
        <title>A tissue-specific atlas of mouse protein phosphorylation and expression.</title>
        <authorList>
            <person name="Huttlin E.L."/>
            <person name="Jedrychowski M.P."/>
            <person name="Elias J.E."/>
            <person name="Goswami T."/>
            <person name="Rad R."/>
            <person name="Beausoleil S.A."/>
            <person name="Villen J."/>
            <person name="Haas W."/>
            <person name="Sowa M.E."/>
            <person name="Gygi S.P."/>
        </authorList>
    </citation>
    <scope>IDENTIFICATION BY MASS SPECTROMETRY [LARGE SCALE ANALYSIS]</scope>
    <source>
        <tissue>Brain</tissue>
        <tissue>Brown adipose tissue</tissue>
        <tissue>Heart</tissue>
        <tissue>Kidney</tissue>
        <tissue>Liver</tissue>
        <tissue>Lung</tissue>
        <tissue>Pancreas</tissue>
        <tissue>Testis</tissue>
    </source>
</reference>
<reference key="4">
    <citation type="journal article" date="2011" name="PLoS ONE">
        <title>Mammalian frataxin: an essential function for cellular viability through an interaction with a preformed ISCU/NFS1/ISD11 iron-sulfur assembly complex.</title>
        <authorList>
            <person name="Schmucker S."/>
            <person name="Martelli A."/>
            <person name="Colin F."/>
            <person name="Page A."/>
            <person name="Wattenhofer-Donze M."/>
            <person name="Reutenauer L."/>
            <person name="Puccio H."/>
        </authorList>
    </citation>
    <scope>SUBUNIT</scope>
</reference>
<reference key="5">
    <citation type="journal article" date="2015" name="Nat. Commun.">
        <title>Mammalian frataxin directly enhances sulfur transfer of NFS1 persulfide to both ISCU and free thiols.</title>
        <authorList>
            <person name="Parent A."/>
            <person name="Elduque X."/>
            <person name="Cornu D."/>
            <person name="Belot L."/>
            <person name="Le Caer J.P."/>
            <person name="Grandas A."/>
            <person name="Toledano M.B."/>
            <person name="D'Autreaux B."/>
        </authorList>
    </citation>
    <scope>SUBUNIT</scope>
</reference>
<reference key="6">
    <citation type="journal article" date="2013" name="Mol. Cell">
        <title>SIRT5-mediated lysine desuccinylation impacts diverse metabolic pathways.</title>
        <authorList>
            <person name="Park J."/>
            <person name="Chen Y."/>
            <person name="Tishkoff D.X."/>
            <person name="Peng C."/>
            <person name="Tan M."/>
            <person name="Dai L."/>
            <person name="Xie Z."/>
            <person name="Zhang Y."/>
            <person name="Zwaans B.M."/>
            <person name="Skinner M.E."/>
            <person name="Lombard D.B."/>
            <person name="Zhao Y."/>
        </authorList>
    </citation>
    <scope>SUCCINYLATION [LARGE SCALE ANALYSIS] AT LYS-47</scope>
    <scope>IDENTIFICATION BY MASS SPECTROMETRY [LARGE SCALE ANALYSIS]</scope>
    <source>
        <tissue>Liver</tissue>
    </source>
</reference>
<protein>
    <recommendedName>
        <fullName evidence="5">LYR motif-containing protein 4</fullName>
    </recommendedName>
</protein>
<sequence>MAASSRAQVLDLYRAMMRESKHFSAYNYRMYAVRRIRDAFRENKNVKDPVEIQALVNKAKRDLEIIRRQVHIGQLYSTDKLIIENQEKPRT</sequence>
<dbReference type="EMBL" id="AK050553">
    <property type="protein sequence ID" value="BAC34321.1"/>
    <property type="molecule type" value="mRNA"/>
</dbReference>
<dbReference type="EMBL" id="BC034664">
    <property type="protein sequence ID" value="AAH34664.1"/>
    <property type="molecule type" value="mRNA"/>
</dbReference>
<dbReference type="EMBL" id="BC080772">
    <property type="protein sequence ID" value="AAH80772.1"/>
    <property type="molecule type" value="mRNA"/>
</dbReference>
<dbReference type="CCDS" id="CCDS36633.1"/>
<dbReference type="RefSeq" id="NP_958746.1">
    <property type="nucleotide sequence ID" value="NM_201358.3"/>
</dbReference>
<dbReference type="SMR" id="Q8K215"/>
<dbReference type="BioGRID" id="237671">
    <property type="interactions" value="8"/>
</dbReference>
<dbReference type="ComplexPortal" id="CPX-5823">
    <property type="entry name" value="Mitochondrial NIAUFX iron-sulfur cluster assembly complex"/>
</dbReference>
<dbReference type="CORUM" id="Q8K215"/>
<dbReference type="FunCoup" id="Q8K215">
    <property type="interactions" value="3067"/>
</dbReference>
<dbReference type="STRING" id="10090.ENSMUSP00000060779"/>
<dbReference type="iPTMnet" id="Q8K215"/>
<dbReference type="PhosphoSitePlus" id="Q8K215"/>
<dbReference type="jPOST" id="Q8K215"/>
<dbReference type="PaxDb" id="10090-ENSMUSP00000060779"/>
<dbReference type="PeptideAtlas" id="Q8K215"/>
<dbReference type="ProteomicsDB" id="292151"/>
<dbReference type="Pumba" id="Q8K215"/>
<dbReference type="Ensembl" id="ENSMUST00000053265.8">
    <property type="protein sequence ID" value="ENSMUSP00000060779.7"/>
    <property type="gene ID" value="ENSMUSG00000046573.8"/>
</dbReference>
<dbReference type="GeneID" id="380840"/>
<dbReference type="KEGG" id="mmu:380840"/>
<dbReference type="UCSC" id="uc007qcj.1">
    <property type="organism name" value="mouse"/>
</dbReference>
<dbReference type="AGR" id="MGI:2683538"/>
<dbReference type="CTD" id="57128"/>
<dbReference type="MGI" id="MGI:2683538">
    <property type="gene designation" value="Lyrm4"/>
</dbReference>
<dbReference type="VEuPathDB" id="HostDB:ENSMUSG00000046573"/>
<dbReference type="eggNOG" id="KOG3801">
    <property type="taxonomic scope" value="Eukaryota"/>
</dbReference>
<dbReference type="GeneTree" id="ENSGT00940000157289"/>
<dbReference type="HOGENOM" id="CLU_120076_3_0_1"/>
<dbReference type="InParanoid" id="Q8K215"/>
<dbReference type="OMA" id="YTTDKLV"/>
<dbReference type="OrthoDB" id="275715at2759"/>
<dbReference type="PhylomeDB" id="Q8K215"/>
<dbReference type="TreeFam" id="TF323581"/>
<dbReference type="Reactome" id="R-MMU-1362409">
    <property type="pathway name" value="Mitochondrial iron-sulfur cluster biogenesis"/>
</dbReference>
<dbReference type="Reactome" id="R-MMU-9854311">
    <property type="pathway name" value="Maturation of TCA enzymes and regulation of TCA cycle"/>
</dbReference>
<dbReference type="Reactome" id="R-MMU-9865881">
    <property type="pathway name" value="Complex III assembly"/>
</dbReference>
<dbReference type="UniPathway" id="UPA00266"/>
<dbReference type="BioGRID-ORCS" id="380840">
    <property type="hits" value="24 hits in 80 CRISPR screens"/>
</dbReference>
<dbReference type="ChiTaRS" id="Lyrm4">
    <property type="organism name" value="mouse"/>
</dbReference>
<dbReference type="PRO" id="PR:Q8K215"/>
<dbReference type="Proteomes" id="UP000000589">
    <property type="component" value="Chromosome 13"/>
</dbReference>
<dbReference type="RNAct" id="Q8K215">
    <property type="molecule type" value="protein"/>
</dbReference>
<dbReference type="Bgee" id="ENSMUSG00000046573">
    <property type="expression patterns" value="Expressed in otolith organ and 226 other cell types or tissues"/>
</dbReference>
<dbReference type="GO" id="GO:1990229">
    <property type="term" value="C:iron-sulfur cluster assembly complex"/>
    <property type="evidence" value="ECO:0000303"/>
    <property type="project" value="ComplexPortal"/>
</dbReference>
<dbReference type="GO" id="GO:0099128">
    <property type="term" value="C:mitochondrial [2Fe-2S] assembly complex"/>
    <property type="evidence" value="ECO:0000314"/>
    <property type="project" value="UniProtKB"/>
</dbReference>
<dbReference type="GO" id="GO:0005739">
    <property type="term" value="C:mitochondrion"/>
    <property type="evidence" value="ECO:0007005"/>
    <property type="project" value="MGI"/>
</dbReference>
<dbReference type="GO" id="GO:0016604">
    <property type="term" value="C:nuclear body"/>
    <property type="evidence" value="ECO:0007669"/>
    <property type="project" value="Ensembl"/>
</dbReference>
<dbReference type="GO" id="GO:0042803">
    <property type="term" value="F:protein homodimerization activity"/>
    <property type="evidence" value="ECO:0007669"/>
    <property type="project" value="Ensembl"/>
</dbReference>
<dbReference type="GO" id="GO:0005198">
    <property type="term" value="F:structural molecule activity"/>
    <property type="evidence" value="ECO:0007669"/>
    <property type="project" value="Ensembl"/>
</dbReference>
<dbReference type="GO" id="GO:0044571">
    <property type="term" value="P:[2Fe-2S] cluster assembly"/>
    <property type="evidence" value="ECO:0000250"/>
    <property type="project" value="UniProtKB"/>
</dbReference>
<dbReference type="GO" id="GO:0044572">
    <property type="term" value="P:[4Fe-4S] cluster assembly"/>
    <property type="evidence" value="ECO:0000314"/>
    <property type="project" value="UniProtKB"/>
</dbReference>
<dbReference type="GO" id="GO:0016226">
    <property type="term" value="P:iron-sulfur cluster assembly"/>
    <property type="evidence" value="ECO:0000303"/>
    <property type="project" value="ComplexPortal"/>
</dbReference>
<dbReference type="CDD" id="cd20264">
    <property type="entry name" value="Complex1_LYR_LYRM4"/>
    <property type="match status" value="1"/>
</dbReference>
<dbReference type="InterPro" id="IPR008011">
    <property type="entry name" value="Complex1_LYR_dom"/>
</dbReference>
<dbReference type="InterPro" id="IPR045297">
    <property type="entry name" value="Complex1_LYR_LYRM4"/>
</dbReference>
<dbReference type="InterPro" id="IPR051522">
    <property type="entry name" value="ISC_assembly_LYR"/>
</dbReference>
<dbReference type="PANTHER" id="PTHR13166:SF7">
    <property type="entry name" value="LYR MOTIF-CONTAINING PROTEIN 4"/>
    <property type="match status" value="1"/>
</dbReference>
<dbReference type="PANTHER" id="PTHR13166">
    <property type="entry name" value="PROTEIN C6ORF149"/>
    <property type="match status" value="1"/>
</dbReference>
<dbReference type="Pfam" id="PF05347">
    <property type="entry name" value="Complex1_LYR"/>
    <property type="match status" value="1"/>
</dbReference>
<proteinExistence type="evidence at protein level"/>
<comment type="function">
    <text evidence="1 2">Stabilizing factor, of the core iron-sulfur cluster (ISC) assembly complex, that regulates, in association with NDUFAB1, the stability and the cysteine desulfurase activity of NFS1 and participates in the [2Fe-2S] clusters assembly on the scaffolding protein ISCU (By similarity). The core iron-sulfur cluster (ISC) assembly complex is involved in the de novo synthesis of a [2Fe-2S] cluster, the first step of the mitochondrial iron-sulfur protein biogenesis. This process is initiated by the cysteine desulfurase complex (NFS1:LYRM4:NDUFAB1) that produces persulfide which is delivered on the scaffold protein ISCU in a FXN-dependent manner. Then this complex is stabilized by FDX2 which provides reducing equivalents to accomplish the [2Fe-2S] cluster assembly. Finally, the [2Fe-2S] cluster is transferred from ISCU to chaperone proteins, including HSCB, HSPA9 and GLRX5 (By similarity). May also participates in the iron-sulfur protein biogenesis in the cytoplasm through its interaction with the cytoplasmic form of NFS1 (By similarity).</text>
</comment>
<comment type="pathway">
    <text evidence="2">Cofactor biosynthesis; iron-sulfur cluster biosynthesis.</text>
</comment>
<comment type="subunit">
    <text evidence="2 3 4">Homodimer. Component of the mitochondrial core iron-sulfur cluster (ISC) complex composed of NFS1, LYRM4, NDUFAB1, ISCU, FXN, and FDX2; this complex is a heterohexamer containing two copies of each monomer (By similarity). Component of the cyteine desulfurase complex composed of NFS1, LYRM4 and NDUFAB1; this complex contributes to the stability and cysteine desulfurase activity of NFS1. Interacts with FXN; this interaction is nickel-dependent. Interacts with the cytoplasmic form of NFS1; the complex increases the stability of NFS1. Forms a complex with the cytoplasmic form of NFS1; this complex increases the stability and cysteine desulfurase activity of NFS1. Interacts with NFS1 (By similarity). Component of a complex composed of FXN, NFS1, LYRM4 and ISCU (PubMed:21298097, PubMed:25597503).</text>
</comment>
<comment type="subcellular location">
    <subcellularLocation>
        <location evidence="2">Mitochondrion</location>
    </subcellularLocation>
    <subcellularLocation>
        <location evidence="2">Nucleus</location>
    </subcellularLocation>
</comment>
<comment type="similarity">
    <text evidence="5">Belongs to the complex I LYR family.</text>
</comment>
<gene>
    <name evidence="6" type="primary">Lyrm4</name>
    <name type="synonym">Isd11</name>
</gene>
<feature type="chain" id="PRO_0000174309" description="LYR motif-containing protein 4">
    <location>
        <begin position="1"/>
        <end position="91"/>
    </location>
</feature>
<feature type="binding site" evidence="2">
    <location>
        <position position="6"/>
    </location>
    <ligand>
        <name>pantetheine 4'-phosphate</name>
        <dbReference type="ChEBI" id="CHEBI:47942"/>
        <note>ligand shared with NDUFAB1</note>
    </ligand>
</feature>
<feature type="binding site" evidence="2">
    <location>
        <position position="44"/>
    </location>
    <ligand>
        <name>pantetheine 4'-phosphate</name>
        <dbReference type="ChEBI" id="CHEBI:47942"/>
        <note>ligand shared with NDUFAB1</note>
    </ligand>
</feature>
<feature type="modified residue" description="N6-succinyllysine" evidence="7">
    <location>
        <position position="47"/>
    </location>
</feature>
<accession>Q8K215</accession>